<proteinExistence type="inferred from homology"/>
<protein>
    <recommendedName>
        <fullName>DASH complex subunit SPC19</fullName>
    </recommendedName>
    <alternativeName>
        <fullName>Outer kinetochore protein SPC19</fullName>
    </alternativeName>
</protein>
<feature type="chain" id="PRO_0000142588" description="DASH complex subunit SPC19">
    <location>
        <begin position="1"/>
        <end position="154"/>
    </location>
</feature>
<feature type="coiled-coil region" evidence="3">
    <location>
        <begin position="72"/>
        <end position="96"/>
    </location>
</feature>
<feature type="coiled-coil region" evidence="3">
    <location>
        <begin position="127"/>
        <end position="154"/>
    </location>
</feature>
<reference key="1">
    <citation type="journal article" date="2004" name="Nature">
        <title>Genome evolution in yeasts.</title>
        <authorList>
            <person name="Dujon B."/>
            <person name="Sherman D."/>
            <person name="Fischer G."/>
            <person name="Durrens P."/>
            <person name="Casaregola S."/>
            <person name="Lafontaine I."/>
            <person name="de Montigny J."/>
            <person name="Marck C."/>
            <person name="Neuveglise C."/>
            <person name="Talla E."/>
            <person name="Goffard N."/>
            <person name="Frangeul L."/>
            <person name="Aigle M."/>
            <person name="Anthouard V."/>
            <person name="Babour A."/>
            <person name="Barbe V."/>
            <person name="Barnay S."/>
            <person name="Blanchin S."/>
            <person name="Beckerich J.-M."/>
            <person name="Beyne E."/>
            <person name="Bleykasten C."/>
            <person name="Boisrame A."/>
            <person name="Boyer J."/>
            <person name="Cattolico L."/>
            <person name="Confanioleri F."/>
            <person name="de Daruvar A."/>
            <person name="Despons L."/>
            <person name="Fabre E."/>
            <person name="Fairhead C."/>
            <person name="Ferry-Dumazet H."/>
            <person name="Groppi A."/>
            <person name="Hantraye F."/>
            <person name="Hennequin C."/>
            <person name="Jauniaux N."/>
            <person name="Joyet P."/>
            <person name="Kachouri R."/>
            <person name="Kerrest A."/>
            <person name="Koszul R."/>
            <person name="Lemaire M."/>
            <person name="Lesur I."/>
            <person name="Ma L."/>
            <person name="Muller H."/>
            <person name="Nicaud J.-M."/>
            <person name="Nikolski M."/>
            <person name="Oztas S."/>
            <person name="Ozier-Kalogeropoulos O."/>
            <person name="Pellenz S."/>
            <person name="Potier S."/>
            <person name="Richard G.-F."/>
            <person name="Straub M.-L."/>
            <person name="Suleau A."/>
            <person name="Swennen D."/>
            <person name="Tekaia F."/>
            <person name="Wesolowski-Louvel M."/>
            <person name="Westhof E."/>
            <person name="Wirth B."/>
            <person name="Zeniou-Meyer M."/>
            <person name="Zivanovic Y."/>
            <person name="Bolotin-Fukuhara M."/>
            <person name="Thierry A."/>
            <person name="Bouchier C."/>
            <person name="Caudron B."/>
            <person name="Scarpelli C."/>
            <person name="Gaillardin C."/>
            <person name="Weissenbach J."/>
            <person name="Wincker P."/>
            <person name="Souciet J.-L."/>
        </authorList>
    </citation>
    <scope>NUCLEOTIDE SEQUENCE [LARGE SCALE GENOMIC DNA]</scope>
    <source>
        <strain>ATCC 2001 / BCRC 20586 / JCM 3761 / NBRC 0622 / NRRL Y-65 / CBS 138</strain>
    </source>
</reference>
<accession>Q6FU86</accession>
<evidence type="ECO:0000250" key="1">
    <source>
        <dbReference type="UniProtKB" id="Q03954"/>
    </source>
</evidence>
<evidence type="ECO:0000250" key="2">
    <source>
        <dbReference type="UniProtKB" id="Q50HP3"/>
    </source>
</evidence>
<evidence type="ECO:0000255" key="3"/>
<evidence type="ECO:0000305" key="4"/>
<name>SPC19_CANGA</name>
<comment type="function">
    <text evidence="1">Component of the DASH complex that connects microtubules with kinetochores and couples microtubule depolymerisation to chromosome movement; it is involved in retrieving kinetochores to the spindle poles before their re-orientation on the spindle in early mitosis and allows microtubule depolymerization to pull chromosomes apart and resist detachment during anaphase. Kinetochores, consisting of a centromere-associated inner segment and a microtubule-contacting outer segment, play a crucial role in chromosome segregation by mediating the physical connection between centromeric DNA and microtubules. Kinetochores also serve as an input point for the spindle assembly checkpoint, which delays anaphase until all chromosomes have bioriented on the mitotic spindle.</text>
</comment>
<comment type="subunit">
    <text evidence="1 2">Component of the DASH complex consisting of ASK1, DAD1, DAD2, DAD3, DAD4, DAM1, DUO1, HSK3, SPC19 and SPC34, with a stoichiometry of one copy of each subunit per complex. Multiple DASH complexes oligomerize to form a ring that encircles spindle microtubules and organizes the rod-like NDC80 complexes of the outer kinetochore. DASH complex oligomerization strengthens microtubule attachments (By similarity). On cytoplasmic microtubules, DASH complexes appear to form patches instead of rings (By similarity).</text>
</comment>
<comment type="subcellular location">
    <subcellularLocation>
        <location evidence="1">Nucleus</location>
    </subcellularLocation>
    <subcellularLocation>
        <location evidence="1">Cytoplasm</location>
        <location evidence="1">Cytoskeleton</location>
        <location evidence="1">Spindle</location>
    </subcellularLocation>
    <subcellularLocation>
        <location evidence="1">Chromosome</location>
        <location evidence="1">Centromere</location>
        <location evidence="1">Kinetochore</location>
    </subcellularLocation>
</comment>
<comment type="similarity">
    <text evidence="4">Belongs to the DASH complex SPC19 family.</text>
</comment>
<gene>
    <name type="primary">SPC19</name>
    <name type="ordered locus">CAGL0F05467g</name>
</gene>
<dbReference type="EMBL" id="CR380952">
    <property type="protein sequence ID" value="CAG59132.1"/>
    <property type="molecule type" value="Genomic_DNA"/>
</dbReference>
<dbReference type="RefSeq" id="XP_446208.1">
    <property type="nucleotide sequence ID" value="XM_446208.1"/>
</dbReference>
<dbReference type="SMR" id="Q6FU86"/>
<dbReference type="FunCoup" id="Q6FU86">
    <property type="interactions" value="51"/>
</dbReference>
<dbReference type="STRING" id="284593.Q6FU86"/>
<dbReference type="EnsemblFungi" id="CAGL0F05467g-T">
    <property type="protein sequence ID" value="CAGL0F05467g-T-p1"/>
    <property type="gene ID" value="CAGL0F05467g"/>
</dbReference>
<dbReference type="KEGG" id="cgr:2887932"/>
<dbReference type="CGD" id="CAL0131330">
    <property type="gene designation" value="CAGL0F05467g"/>
</dbReference>
<dbReference type="VEuPathDB" id="FungiDB:B1J91_F05467g"/>
<dbReference type="VEuPathDB" id="FungiDB:CAGL0F05467g"/>
<dbReference type="eggNOG" id="ENOG502SDEQ">
    <property type="taxonomic scope" value="Eukaryota"/>
</dbReference>
<dbReference type="HOGENOM" id="CLU_1678217_0_0_1"/>
<dbReference type="InParanoid" id="Q6FU86"/>
<dbReference type="OMA" id="HKNGYDV"/>
<dbReference type="Proteomes" id="UP000002428">
    <property type="component" value="Chromosome F"/>
</dbReference>
<dbReference type="GO" id="GO:0005737">
    <property type="term" value="C:cytoplasm"/>
    <property type="evidence" value="ECO:0007669"/>
    <property type="project" value="UniProtKB-KW"/>
</dbReference>
<dbReference type="GO" id="GO:0042729">
    <property type="term" value="C:DASH complex"/>
    <property type="evidence" value="ECO:0000250"/>
    <property type="project" value="UniProtKB"/>
</dbReference>
<dbReference type="GO" id="GO:0005876">
    <property type="term" value="C:spindle microtubule"/>
    <property type="evidence" value="ECO:0007669"/>
    <property type="project" value="InterPro"/>
</dbReference>
<dbReference type="GO" id="GO:0051010">
    <property type="term" value="F:microtubule plus-end binding"/>
    <property type="evidence" value="ECO:0007669"/>
    <property type="project" value="EnsemblFungi"/>
</dbReference>
<dbReference type="GO" id="GO:0008608">
    <property type="term" value="P:attachment of spindle microtubules to kinetochore"/>
    <property type="evidence" value="ECO:0000250"/>
    <property type="project" value="UniProtKB"/>
</dbReference>
<dbReference type="GO" id="GO:0051301">
    <property type="term" value="P:cell division"/>
    <property type="evidence" value="ECO:0007669"/>
    <property type="project" value="UniProtKB-KW"/>
</dbReference>
<dbReference type="GO" id="GO:1990758">
    <property type="term" value="P:mitotic sister chromatid biorientation"/>
    <property type="evidence" value="ECO:0000250"/>
    <property type="project" value="UniProtKB"/>
</dbReference>
<dbReference type="GO" id="GO:0051987">
    <property type="term" value="P:positive regulation of attachment of spindle microtubules to kinetochore"/>
    <property type="evidence" value="ECO:0007669"/>
    <property type="project" value="EnsemblFungi"/>
</dbReference>
<dbReference type="GO" id="GO:0031116">
    <property type="term" value="P:positive regulation of microtubule polymerization"/>
    <property type="evidence" value="ECO:0007669"/>
    <property type="project" value="EnsemblFungi"/>
</dbReference>
<dbReference type="GO" id="GO:1990976">
    <property type="term" value="P:protein transport along microtubule to mitotic spindle pole body"/>
    <property type="evidence" value="ECO:0000250"/>
    <property type="project" value="UniProtKB"/>
</dbReference>
<dbReference type="InterPro" id="IPR013251">
    <property type="entry name" value="DASH_Spc19"/>
</dbReference>
<dbReference type="PANTHER" id="PTHR28262">
    <property type="entry name" value="DASH COMPLEX SUBUNIT SPC19"/>
    <property type="match status" value="1"/>
</dbReference>
<dbReference type="PANTHER" id="PTHR28262:SF1">
    <property type="entry name" value="DASH COMPLEX SUBUNIT SPC19"/>
    <property type="match status" value="1"/>
</dbReference>
<dbReference type="Pfam" id="PF08287">
    <property type="entry name" value="DASH_Spc19"/>
    <property type="match status" value="1"/>
</dbReference>
<sequence>MQSLEQCVNSLEAIVHQLDGSVSRLARNGEASNELCEGILKIKRVFELVPEYDVESARLALFEEVDPMVKTLGDKIEKALIRKRRELENLRQTSELNSLRLSGDLYFSETGIDNQDMDVSTDAIAIASATDAELDELRALKARRAELQELLDGR</sequence>
<organism>
    <name type="scientific">Candida glabrata (strain ATCC 2001 / BCRC 20586 / JCM 3761 / NBRC 0622 / NRRL Y-65 / CBS 138)</name>
    <name type="common">Yeast</name>
    <name type="synonym">Nakaseomyces glabratus</name>
    <dbReference type="NCBI Taxonomy" id="284593"/>
    <lineage>
        <taxon>Eukaryota</taxon>
        <taxon>Fungi</taxon>
        <taxon>Dikarya</taxon>
        <taxon>Ascomycota</taxon>
        <taxon>Saccharomycotina</taxon>
        <taxon>Saccharomycetes</taxon>
        <taxon>Saccharomycetales</taxon>
        <taxon>Saccharomycetaceae</taxon>
        <taxon>Nakaseomyces</taxon>
    </lineage>
</organism>
<keyword id="KW-0131">Cell cycle</keyword>
<keyword id="KW-0132">Cell division</keyword>
<keyword id="KW-0137">Centromere</keyword>
<keyword id="KW-0158">Chromosome</keyword>
<keyword id="KW-0159">Chromosome partition</keyword>
<keyword id="KW-0175">Coiled coil</keyword>
<keyword id="KW-0963">Cytoplasm</keyword>
<keyword id="KW-0206">Cytoskeleton</keyword>
<keyword id="KW-0995">Kinetochore</keyword>
<keyword id="KW-0493">Microtubule</keyword>
<keyword id="KW-0498">Mitosis</keyword>
<keyword id="KW-0539">Nucleus</keyword>
<keyword id="KW-1185">Reference proteome</keyword>